<reference key="1">
    <citation type="journal article" date="1998" name="Nature">
        <title>Deciphering the biology of Mycobacterium tuberculosis from the complete genome sequence.</title>
        <authorList>
            <person name="Cole S.T."/>
            <person name="Brosch R."/>
            <person name="Parkhill J."/>
            <person name="Garnier T."/>
            <person name="Churcher C.M."/>
            <person name="Harris D.E."/>
            <person name="Gordon S.V."/>
            <person name="Eiglmeier K."/>
            <person name="Gas S."/>
            <person name="Barry C.E. III"/>
            <person name="Tekaia F."/>
            <person name="Badcock K."/>
            <person name="Basham D."/>
            <person name="Brown D."/>
            <person name="Chillingworth T."/>
            <person name="Connor R."/>
            <person name="Davies R.M."/>
            <person name="Devlin K."/>
            <person name="Feltwell T."/>
            <person name="Gentles S."/>
            <person name="Hamlin N."/>
            <person name="Holroyd S."/>
            <person name="Hornsby T."/>
            <person name="Jagels K."/>
            <person name="Krogh A."/>
            <person name="McLean J."/>
            <person name="Moule S."/>
            <person name="Murphy L.D."/>
            <person name="Oliver S."/>
            <person name="Osborne J."/>
            <person name="Quail M.A."/>
            <person name="Rajandream M.A."/>
            <person name="Rogers J."/>
            <person name="Rutter S."/>
            <person name="Seeger K."/>
            <person name="Skelton S."/>
            <person name="Squares S."/>
            <person name="Squares R."/>
            <person name="Sulston J.E."/>
            <person name="Taylor K."/>
            <person name="Whitehead S."/>
            <person name="Barrell B.G."/>
        </authorList>
    </citation>
    <scope>NUCLEOTIDE SEQUENCE [LARGE SCALE GENOMIC DNA]</scope>
    <source>
        <strain>ATCC 25618 / H37Rv</strain>
    </source>
</reference>
<reference key="2">
    <citation type="journal article" date="2009" name="PLoS Genet.">
        <title>Comprehensive functional analysis of Mycobacterium tuberculosis toxin-antitoxin systems: implications for pathogenesis, stress responses, and evolution.</title>
        <authorList>
            <person name="Ramage H.R."/>
            <person name="Connolly L.E."/>
            <person name="Cox J.S."/>
        </authorList>
    </citation>
    <scope>EXPRESSION IN M.SMEGMATIS</scope>
    <scope>FUNCTION AS AN ANTITOXIN</scope>
    <source>
        <strain>ATCC 35801 / TMC 107 / Erdman</strain>
    </source>
</reference>
<reference key="3">
    <citation type="journal article" date="2011" name="Mol. Cell. Proteomics">
        <title>Proteogenomic analysis of Mycobacterium tuberculosis by high resolution mass spectrometry.</title>
        <authorList>
            <person name="Kelkar D.S."/>
            <person name="Kumar D."/>
            <person name="Kumar P."/>
            <person name="Balakrishnan L."/>
            <person name="Muthusamy B."/>
            <person name="Yadav A.K."/>
            <person name="Shrivastava P."/>
            <person name="Marimuthu A."/>
            <person name="Anand S."/>
            <person name="Sundaram H."/>
            <person name="Kingsbury R."/>
            <person name="Harsha H.C."/>
            <person name="Nair B."/>
            <person name="Prasad T.S."/>
            <person name="Chauhan D.S."/>
            <person name="Katoch K."/>
            <person name="Katoch V.M."/>
            <person name="Kumar P."/>
            <person name="Chaerkady R."/>
            <person name="Ramachandran S."/>
            <person name="Dash D."/>
            <person name="Pandey A."/>
        </authorList>
    </citation>
    <scope>IDENTIFICATION BY MASS SPECTROMETRY [LARGE SCALE ANALYSIS]</scope>
    <source>
        <strain>ATCC 25618 / H37Rv</strain>
    </source>
</reference>
<organism>
    <name type="scientific">Mycobacterium tuberculosis (strain ATCC 25618 / H37Rv)</name>
    <dbReference type="NCBI Taxonomy" id="83332"/>
    <lineage>
        <taxon>Bacteria</taxon>
        <taxon>Bacillati</taxon>
        <taxon>Actinomycetota</taxon>
        <taxon>Actinomycetes</taxon>
        <taxon>Mycobacteriales</taxon>
        <taxon>Mycobacteriaceae</taxon>
        <taxon>Mycobacterium</taxon>
        <taxon>Mycobacterium tuberculosis complex</taxon>
    </lineage>
</organism>
<gene>
    <name type="ordered locus">Rv0909</name>
</gene>
<name>Y909_MYCTU</name>
<comment type="function">
    <text evidence="1">Antitoxin component of a type II toxin-antitoxin (TA) system. Upon expression in M.smegmatis neutralizes the effect of cognate toxin Rv0910.</text>
</comment>
<evidence type="ECO:0000269" key="1">
    <source>
    </source>
</evidence>
<proteinExistence type="evidence at protein level"/>
<dbReference type="EMBL" id="AL123456">
    <property type="protein sequence ID" value="CCP43657.1"/>
    <property type="molecule type" value="Genomic_DNA"/>
</dbReference>
<dbReference type="PIR" id="E70581">
    <property type="entry name" value="E70581"/>
</dbReference>
<dbReference type="RefSeq" id="NP_215424.1">
    <property type="nucleotide sequence ID" value="NC_000962.3"/>
</dbReference>
<dbReference type="RefSeq" id="WP_003898641.1">
    <property type="nucleotide sequence ID" value="NZ_NVQJ01000001.1"/>
</dbReference>
<dbReference type="SMR" id="P9WJ07"/>
<dbReference type="STRING" id="83332.Rv0909"/>
<dbReference type="PaxDb" id="83332-Rv0909"/>
<dbReference type="DNASU" id="885197"/>
<dbReference type="GeneID" id="885197"/>
<dbReference type="KEGG" id="mtu:Rv0909"/>
<dbReference type="KEGG" id="mtv:RVBD_0909"/>
<dbReference type="TubercuList" id="Rv0909"/>
<dbReference type="eggNOG" id="ENOG5033D21">
    <property type="taxonomic scope" value="Bacteria"/>
</dbReference>
<dbReference type="InParanoid" id="P9WJ07"/>
<dbReference type="OrthoDB" id="4843846at2"/>
<dbReference type="Proteomes" id="UP000001584">
    <property type="component" value="Chromosome"/>
</dbReference>
<dbReference type="GO" id="GO:0045927">
    <property type="term" value="P:positive regulation of growth"/>
    <property type="evidence" value="ECO:0000315"/>
    <property type="project" value="MTBBASE"/>
</dbReference>
<dbReference type="InterPro" id="IPR028037">
    <property type="entry name" value="Antitoxin_Rv0909/MT0933"/>
</dbReference>
<dbReference type="Pfam" id="PF14013">
    <property type="entry name" value="MT0933_antitox"/>
    <property type="match status" value="1"/>
</dbReference>
<protein>
    <recommendedName>
        <fullName>Antitoxin Rv0909</fullName>
    </recommendedName>
</protein>
<sequence length="59" mass="6403">MGILDKVKNLLSQNADKVETVINKAGEFVDEQTQGNYSDAIHKLHDAASNVVGMSDQQS</sequence>
<feature type="chain" id="PRO_0000406886" description="Antitoxin Rv0909">
    <location>
        <begin position="1"/>
        <end position="59"/>
    </location>
</feature>
<keyword id="KW-1185">Reference proteome</keyword>
<keyword id="KW-1277">Toxin-antitoxin system</keyword>
<accession>P9WJ07</accession>
<accession>L0T830</accession>
<accession>O05901</accession>
<accession>Q7D943</accession>